<gene>
    <name evidence="2" type="primary">mutM</name>
    <name evidence="2" type="synonym">fpg</name>
    <name type="ordered locus">cauri_1602</name>
</gene>
<accession>C3PH91</accession>
<protein>
    <recommendedName>
        <fullName evidence="2">Formamidopyrimidine-DNA glycosylase</fullName>
        <shortName evidence="2">Fapy-DNA glycosylase</shortName>
        <ecNumber evidence="2">3.2.2.23</ecNumber>
    </recommendedName>
    <alternativeName>
        <fullName evidence="2">DNA-(apurinic or apyrimidinic site) lyase MutM</fullName>
        <shortName evidence="2">AP lyase MutM</shortName>
        <ecNumber evidence="2">4.2.99.18</ecNumber>
    </alternativeName>
</protein>
<dbReference type="EC" id="3.2.2.23" evidence="2"/>
<dbReference type="EC" id="4.2.99.18" evidence="2"/>
<dbReference type="EMBL" id="CP001601">
    <property type="protein sequence ID" value="ACP33195.1"/>
    <property type="molecule type" value="Genomic_DNA"/>
</dbReference>
<dbReference type="RefSeq" id="WP_010190448.1">
    <property type="nucleotide sequence ID" value="NC_012590.1"/>
</dbReference>
<dbReference type="SMR" id="C3PH91"/>
<dbReference type="STRING" id="548476.cauri_1602"/>
<dbReference type="GeneID" id="31924233"/>
<dbReference type="KEGG" id="car:cauri_1602"/>
<dbReference type="eggNOG" id="COG0266">
    <property type="taxonomic scope" value="Bacteria"/>
</dbReference>
<dbReference type="HOGENOM" id="CLU_038423_1_2_11"/>
<dbReference type="OrthoDB" id="9800855at2"/>
<dbReference type="Proteomes" id="UP000002077">
    <property type="component" value="Chromosome"/>
</dbReference>
<dbReference type="GO" id="GO:0034039">
    <property type="term" value="F:8-oxo-7,8-dihydroguanine DNA N-glycosylase activity"/>
    <property type="evidence" value="ECO:0007669"/>
    <property type="project" value="TreeGrafter"/>
</dbReference>
<dbReference type="GO" id="GO:0140078">
    <property type="term" value="F:class I DNA-(apurinic or apyrimidinic site) endonuclease activity"/>
    <property type="evidence" value="ECO:0007669"/>
    <property type="project" value="UniProtKB-EC"/>
</dbReference>
<dbReference type="GO" id="GO:0003684">
    <property type="term" value="F:damaged DNA binding"/>
    <property type="evidence" value="ECO:0007669"/>
    <property type="project" value="InterPro"/>
</dbReference>
<dbReference type="GO" id="GO:0008270">
    <property type="term" value="F:zinc ion binding"/>
    <property type="evidence" value="ECO:0007669"/>
    <property type="project" value="UniProtKB-UniRule"/>
</dbReference>
<dbReference type="GO" id="GO:0006284">
    <property type="term" value="P:base-excision repair"/>
    <property type="evidence" value="ECO:0007669"/>
    <property type="project" value="InterPro"/>
</dbReference>
<dbReference type="CDD" id="cd08966">
    <property type="entry name" value="EcFpg-like_N"/>
    <property type="match status" value="1"/>
</dbReference>
<dbReference type="FunFam" id="1.10.8.50:FF:000003">
    <property type="entry name" value="Formamidopyrimidine-DNA glycosylase"/>
    <property type="match status" value="1"/>
</dbReference>
<dbReference type="Gene3D" id="1.10.8.50">
    <property type="match status" value="1"/>
</dbReference>
<dbReference type="Gene3D" id="3.20.190.10">
    <property type="entry name" value="MutM-like, N-terminal"/>
    <property type="match status" value="1"/>
</dbReference>
<dbReference type="HAMAP" id="MF_00103">
    <property type="entry name" value="Fapy_DNA_glycosyl"/>
    <property type="match status" value="1"/>
</dbReference>
<dbReference type="InterPro" id="IPR015886">
    <property type="entry name" value="DNA_glyclase/AP_lyase_DNA-bd"/>
</dbReference>
<dbReference type="InterPro" id="IPR015887">
    <property type="entry name" value="DNA_glyclase_Znf_dom_DNA_BS"/>
</dbReference>
<dbReference type="InterPro" id="IPR020629">
    <property type="entry name" value="Formamido-pyr_DNA_Glyclase"/>
</dbReference>
<dbReference type="InterPro" id="IPR012319">
    <property type="entry name" value="FPG_cat"/>
</dbReference>
<dbReference type="InterPro" id="IPR035937">
    <property type="entry name" value="MutM-like_N-ter"/>
</dbReference>
<dbReference type="InterPro" id="IPR010979">
    <property type="entry name" value="Ribosomal_uS13-like_H2TH"/>
</dbReference>
<dbReference type="InterPro" id="IPR000214">
    <property type="entry name" value="Znf_DNA_glyclase/AP_lyase"/>
</dbReference>
<dbReference type="InterPro" id="IPR010663">
    <property type="entry name" value="Znf_FPG/IleRS"/>
</dbReference>
<dbReference type="NCBIfam" id="TIGR00577">
    <property type="entry name" value="fpg"/>
    <property type="match status" value="1"/>
</dbReference>
<dbReference type="NCBIfam" id="NF002211">
    <property type="entry name" value="PRK01103.1"/>
    <property type="match status" value="1"/>
</dbReference>
<dbReference type="PANTHER" id="PTHR22993">
    <property type="entry name" value="FORMAMIDOPYRIMIDINE-DNA GLYCOSYLASE"/>
    <property type="match status" value="1"/>
</dbReference>
<dbReference type="PANTHER" id="PTHR22993:SF9">
    <property type="entry name" value="FORMAMIDOPYRIMIDINE-DNA GLYCOSYLASE"/>
    <property type="match status" value="1"/>
</dbReference>
<dbReference type="Pfam" id="PF01149">
    <property type="entry name" value="Fapy_DNA_glyco"/>
    <property type="match status" value="1"/>
</dbReference>
<dbReference type="Pfam" id="PF06831">
    <property type="entry name" value="H2TH"/>
    <property type="match status" value="1"/>
</dbReference>
<dbReference type="Pfam" id="PF06827">
    <property type="entry name" value="zf-FPG_IleRS"/>
    <property type="match status" value="1"/>
</dbReference>
<dbReference type="SMART" id="SM00898">
    <property type="entry name" value="Fapy_DNA_glyco"/>
    <property type="match status" value="1"/>
</dbReference>
<dbReference type="SMART" id="SM01232">
    <property type="entry name" value="H2TH"/>
    <property type="match status" value="1"/>
</dbReference>
<dbReference type="SUPFAM" id="SSF57716">
    <property type="entry name" value="Glucocorticoid receptor-like (DNA-binding domain)"/>
    <property type="match status" value="1"/>
</dbReference>
<dbReference type="SUPFAM" id="SSF81624">
    <property type="entry name" value="N-terminal domain of MutM-like DNA repair proteins"/>
    <property type="match status" value="1"/>
</dbReference>
<dbReference type="SUPFAM" id="SSF46946">
    <property type="entry name" value="S13-like H2TH domain"/>
    <property type="match status" value="1"/>
</dbReference>
<dbReference type="PROSITE" id="PS51068">
    <property type="entry name" value="FPG_CAT"/>
    <property type="match status" value="1"/>
</dbReference>
<dbReference type="PROSITE" id="PS01242">
    <property type="entry name" value="ZF_FPG_1"/>
    <property type="match status" value="1"/>
</dbReference>
<dbReference type="PROSITE" id="PS51066">
    <property type="entry name" value="ZF_FPG_2"/>
    <property type="match status" value="1"/>
</dbReference>
<reference key="1">
    <citation type="journal article" date="2010" name="BMC Genomics">
        <title>Complete genome sequence and lifestyle of black-pigmented Corynebacterium aurimucosum ATCC 700975 (formerly C. nigricans CN-1) isolated from a vaginal swab of a woman with spontaneous abortion.</title>
        <authorList>
            <person name="Trost E."/>
            <person name="Gotker S."/>
            <person name="Schneider J."/>
            <person name="Schneiker-Bekel S."/>
            <person name="Szczepanowski R."/>
            <person name="Tilker A."/>
            <person name="Viehoever P."/>
            <person name="Arnold W."/>
            <person name="Bekel T."/>
            <person name="Blom J."/>
            <person name="Gartemann K.H."/>
            <person name="Linke B."/>
            <person name="Goesmann A."/>
            <person name="Puhler A."/>
            <person name="Shukla S.K."/>
            <person name="Tauch A."/>
        </authorList>
    </citation>
    <scope>NUCLEOTIDE SEQUENCE [LARGE SCALE GENOMIC DNA]</scope>
    <source>
        <strain>ATCC 700975 / DSM 44827 / CIP 107346 / CN-1</strain>
    </source>
</reference>
<organism>
    <name type="scientific">Corynebacterium aurimucosum (strain ATCC 700975 / DSM 44827 / CIP 107346 / CN-1)</name>
    <name type="common">Corynebacterium nigricans</name>
    <dbReference type="NCBI Taxonomy" id="548476"/>
    <lineage>
        <taxon>Bacteria</taxon>
        <taxon>Bacillati</taxon>
        <taxon>Actinomycetota</taxon>
        <taxon>Actinomycetes</taxon>
        <taxon>Mycobacteriales</taxon>
        <taxon>Corynebacteriaceae</taxon>
        <taxon>Corynebacterium</taxon>
    </lineage>
</organism>
<sequence length="282" mass="30702">MPELPEVESVRRGLEPYVVGRSFAAVEVHHPRANRGQEAPLSALLVGRKIAAVARRGKFMWLEFADEDHSDPARDVLFIHLGMSGQVRIGEVDSPHVRIAAVLDDTTRLSFVDQRTFGYWRLGPWLSMAHIAPDPLETDFDLTAAGRRLRAKRTVVKAALLDQTVLSGVGNIYADEALWAVQISPLKKASALRQRDAVAVISAAADVMRAALAVGGTSFDALYVNVNGESGYFDRSLHVYGRGGQPCERCGEEILKTVLGGRGTHYCPSCQNRGVGRKSAAN</sequence>
<feature type="initiator methionine" description="Removed" evidence="1">
    <location>
        <position position="1"/>
    </location>
</feature>
<feature type="chain" id="PRO_1000118884" description="Formamidopyrimidine-DNA glycosylase">
    <location>
        <begin position="2"/>
        <end position="282"/>
    </location>
</feature>
<feature type="zinc finger region" description="FPG-type" evidence="2">
    <location>
        <begin position="238"/>
        <end position="272"/>
    </location>
</feature>
<feature type="active site" description="Schiff-base intermediate with DNA" evidence="2">
    <location>
        <position position="2"/>
    </location>
</feature>
<feature type="active site" description="Proton donor" evidence="2">
    <location>
        <position position="3"/>
    </location>
</feature>
<feature type="active site" description="Proton donor; for beta-elimination activity" evidence="2">
    <location>
        <position position="58"/>
    </location>
</feature>
<feature type="active site" description="Proton donor; for delta-elimination activity" evidence="2">
    <location>
        <position position="262"/>
    </location>
</feature>
<feature type="binding site" evidence="2">
    <location>
        <position position="96"/>
    </location>
    <ligand>
        <name>DNA</name>
        <dbReference type="ChEBI" id="CHEBI:16991"/>
    </ligand>
</feature>
<feature type="binding site" evidence="2">
    <location>
        <position position="115"/>
    </location>
    <ligand>
        <name>DNA</name>
        <dbReference type="ChEBI" id="CHEBI:16991"/>
    </ligand>
</feature>
<feature type="binding site" evidence="2">
    <location>
        <position position="152"/>
    </location>
    <ligand>
        <name>DNA</name>
        <dbReference type="ChEBI" id="CHEBI:16991"/>
    </ligand>
</feature>
<proteinExistence type="inferred from homology"/>
<name>FPG_CORA7</name>
<evidence type="ECO:0000250" key="1"/>
<evidence type="ECO:0000255" key="2">
    <source>
        <dbReference type="HAMAP-Rule" id="MF_00103"/>
    </source>
</evidence>
<keyword id="KW-0227">DNA damage</keyword>
<keyword id="KW-0234">DNA repair</keyword>
<keyword id="KW-0238">DNA-binding</keyword>
<keyword id="KW-0326">Glycosidase</keyword>
<keyword id="KW-0378">Hydrolase</keyword>
<keyword id="KW-0456">Lyase</keyword>
<keyword id="KW-0479">Metal-binding</keyword>
<keyword id="KW-0511">Multifunctional enzyme</keyword>
<keyword id="KW-1185">Reference proteome</keyword>
<keyword id="KW-0862">Zinc</keyword>
<keyword id="KW-0863">Zinc-finger</keyword>
<comment type="function">
    <text evidence="2">Involved in base excision repair of DNA damaged by oxidation or by mutagenic agents. Acts as a DNA glycosylase that recognizes and removes damaged bases. Has a preference for oxidized purines, such as 7,8-dihydro-8-oxoguanine (8-oxoG). Has AP (apurinic/apyrimidinic) lyase activity and introduces nicks in the DNA strand. Cleaves the DNA backbone by beta-delta elimination to generate a single-strand break at the site of the removed base with both 3'- and 5'-phosphates.</text>
</comment>
<comment type="catalytic activity">
    <reaction evidence="2">
        <text>Hydrolysis of DNA containing ring-opened 7-methylguanine residues, releasing 2,6-diamino-4-hydroxy-5-(N-methyl)formamidopyrimidine.</text>
        <dbReference type="EC" id="3.2.2.23"/>
    </reaction>
</comment>
<comment type="catalytic activity">
    <reaction evidence="2">
        <text>2'-deoxyribonucleotide-(2'-deoxyribose 5'-phosphate)-2'-deoxyribonucleotide-DNA = a 3'-end 2'-deoxyribonucleotide-(2,3-dehydro-2,3-deoxyribose 5'-phosphate)-DNA + a 5'-end 5'-phospho-2'-deoxyribonucleoside-DNA + H(+)</text>
        <dbReference type="Rhea" id="RHEA:66592"/>
        <dbReference type="Rhea" id="RHEA-COMP:13180"/>
        <dbReference type="Rhea" id="RHEA-COMP:16897"/>
        <dbReference type="Rhea" id="RHEA-COMP:17067"/>
        <dbReference type="ChEBI" id="CHEBI:15378"/>
        <dbReference type="ChEBI" id="CHEBI:136412"/>
        <dbReference type="ChEBI" id="CHEBI:157695"/>
        <dbReference type="ChEBI" id="CHEBI:167181"/>
        <dbReference type="EC" id="4.2.99.18"/>
    </reaction>
</comment>
<comment type="cofactor">
    <cofactor evidence="2">
        <name>Zn(2+)</name>
        <dbReference type="ChEBI" id="CHEBI:29105"/>
    </cofactor>
    <text evidence="2">Binds 1 zinc ion per subunit.</text>
</comment>
<comment type="subunit">
    <text evidence="2">Monomer.</text>
</comment>
<comment type="similarity">
    <text evidence="2">Belongs to the FPG family.</text>
</comment>